<reference key="1">
    <citation type="submission" date="2008-02" db="EMBL/GenBank/DDBJ databases">
        <title>Complete sequence of chromosome of Methylobacterium sp. 4-46.</title>
        <authorList>
            <consortium name="US DOE Joint Genome Institute"/>
            <person name="Copeland A."/>
            <person name="Lucas S."/>
            <person name="Lapidus A."/>
            <person name="Glavina del Rio T."/>
            <person name="Dalin E."/>
            <person name="Tice H."/>
            <person name="Bruce D."/>
            <person name="Goodwin L."/>
            <person name="Pitluck S."/>
            <person name="Chertkov O."/>
            <person name="Brettin T."/>
            <person name="Detter J.C."/>
            <person name="Han C."/>
            <person name="Kuske C.R."/>
            <person name="Schmutz J."/>
            <person name="Larimer F."/>
            <person name="Land M."/>
            <person name="Hauser L."/>
            <person name="Kyrpides N."/>
            <person name="Ivanova N."/>
            <person name="Marx C.J."/>
            <person name="Richardson P."/>
        </authorList>
    </citation>
    <scope>NUCLEOTIDE SEQUENCE [LARGE SCALE GENOMIC DNA]</scope>
    <source>
        <strain>4-46</strain>
    </source>
</reference>
<sequence>MVIAIDGPAASGKGTLARRLAQHYGLPHLDTGLLYRAVALALLDAERDLRDEAAAEAAARTLRAESLGDARLRERAMGEAASLVSALPAVRAALLDWQRRFAAAPGGAVLDGRDIGTVVCPDAPVKLFITASPEERAHRRHRELGGRGEPVAFEAVLADIVRRDARDADRAAAPLRVADDAVVIDTTALDAEAAFRAAAAVVEARWPGRG</sequence>
<accession>B0UC53</accession>
<dbReference type="EC" id="2.7.4.25" evidence="1"/>
<dbReference type="EMBL" id="CP000943">
    <property type="protein sequence ID" value="ACA20804.1"/>
    <property type="molecule type" value="Genomic_DNA"/>
</dbReference>
<dbReference type="RefSeq" id="WP_012336180.1">
    <property type="nucleotide sequence ID" value="NC_010511.1"/>
</dbReference>
<dbReference type="SMR" id="B0UC53"/>
<dbReference type="STRING" id="426117.M446_6548"/>
<dbReference type="KEGG" id="met:M446_6548"/>
<dbReference type="eggNOG" id="COG0283">
    <property type="taxonomic scope" value="Bacteria"/>
</dbReference>
<dbReference type="HOGENOM" id="CLU_079959_0_1_5"/>
<dbReference type="GO" id="GO:0005737">
    <property type="term" value="C:cytoplasm"/>
    <property type="evidence" value="ECO:0007669"/>
    <property type="project" value="UniProtKB-SubCell"/>
</dbReference>
<dbReference type="GO" id="GO:0005524">
    <property type="term" value="F:ATP binding"/>
    <property type="evidence" value="ECO:0007669"/>
    <property type="project" value="UniProtKB-UniRule"/>
</dbReference>
<dbReference type="GO" id="GO:0036430">
    <property type="term" value="F:CMP kinase activity"/>
    <property type="evidence" value="ECO:0007669"/>
    <property type="project" value="RHEA"/>
</dbReference>
<dbReference type="GO" id="GO:0036431">
    <property type="term" value="F:dCMP kinase activity"/>
    <property type="evidence" value="ECO:0007669"/>
    <property type="project" value="RHEA"/>
</dbReference>
<dbReference type="GO" id="GO:0006220">
    <property type="term" value="P:pyrimidine nucleotide metabolic process"/>
    <property type="evidence" value="ECO:0007669"/>
    <property type="project" value="UniProtKB-UniRule"/>
</dbReference>
<dbReference type="CDD" id="cd02020">
    <property type="entry name" value="CMPK"/>
    <property type="match status" value="1"/>
</dbReference>
<dbReference type="Gene3D" id="3.40.50.300">
    <property type="entry name" value="P-loop containing nucleotide triphosphate hydrolases"/>
    <property type="match status" value="1"/>
</dbReference>
<dbReference type="HAMAP" id="MF_00238">
    <property type="entry name" value="Cytidyl_kinase_type1"/>
    <property type="match status" value="1"/>
</dbReference>
<dbReference type="InterPro" id="IPR003136">
    <property type="entry name" value="Cytidylate_kin"/>
</dbReference>
<dbReference type="InterPro" id="IPR011994">
    <property type="entry name" value="Cytidylate_kinase_dom"/>
</dbReference>
<dbReference type="InterPro" id="IPR027417">
    <property type="entry name" value="P-loop_NTPase"/>
</dbReference>
<dbReference type="NCBIfam" id="TIGR00017">
    <property type="entry name" value="cmk"/>
    <property type="match status" value="1"/>
</dbReference>
<dbReference type="Pfam" id="PF02224">
    <property type="entry name" value="Cytidylate_kin"/>
    <property type="match status" value="1"/>
</dbReference>
<dbReference type="SUPFAM" id="SSF52540">
    <property type="entry name" value="P-loop containing nucleoside triphosphate hydrolases"/>
    <property type="match status" value="1"/>
</dbReference>
<evidence type="ECO:0000255" key="1">
    <source>
        <dbReference type="HAMAP-Rule" id="MF_00238"/>
    </source>
</evidence>
<comment type="catalytic activity">
    <reaction evidence="1">
        <text>CMP + ATP = CDP + ADP</text>
        <dbReference type="Rhea" id="RHEA:11600"/>
        <dbReference type="ChEBI" id="CHEBI:30616"/>
        <dbReference type="ChEBI" id="CHEBI:58069"/>
        <dbReference type="ChEBI" id="CHEBI:60377"/>
        <dbReference type="ChEBI" id="CHEBI:456216"/>
        <dbReference type="EC" id="2.7.4.25"/>
    </reaction>
</comment>
<comment type="catalytic activity">
    <reaction evidence="1">
        <text>dCMP + ATP = dCDP + ADP</text>
        <dbReference type="Rhea" id="RHEA:25094"/>
        <dbReference type="ChEBI" id="CHEBI:30616"/>
        <dbReference type="ChEBI" id="CHEBI:57566"/>
        <dbReference type="ChEBI" id="CHEBI:58593"/>
        <dbReference type="ChEBI" id="CHEBI:456216"/>
        <dbReference type="EC" id="2.7.4.25"/>
    </reaction>
</comment>
<comment type="subcellular location">
    <subcellularLocation>
        <location evidence="1">Cytoplasm</location>
    </subcellularLocation>
</comment>
<comment type="similarity">
    <text evidence="1">Belongs to the cytidylate kinase family. Type 1 subfamily.</text>
</comment>
<protein>
    <recommendedName>
        <fullName evidence="1">Cytidylate kinase</fullName>
        <shortName evidence="1">CK</shortName>
        <ecNumber evidence="1">2.7.4.25</ecNumber>
    </recommendedName>
    <alternativeName>
        <fullName evidence="1">Cytidine monophosphate kinase</fullName>
        <shortName evidence="1">CMP kinase</shortName>
    </alternativeName>
</protein>
<feature type="chain" id="PRO_1000100668" description="Cytidylate kinase">
    <location>
        <begin position="1"/>
        <end position="210"/>
    </location>
</feature>
<feature type="binding site" evidence="1">
    <location>
        <begin position="7"/>
        <end position="15"/>
    </location>
    <ligand>
        <name>ATP</name>
        <dbReference type="ChEBI" id="CHEBI:30616"/>
    </ligand>
</feature>
<gene>
    <name evidence="1" type="primary">cmk</name>
    <name type="ordered locus">M446_6548</name>
</gene>
<keyword id="KW-0067">ATP-binding</keyword>
<keyword id="KW-0963">Cytoplasm</keyword>
<keyword id="KW-0418">Kinase</keyword>
<keyword id="KW-0547">Nucleotide-binding</keyword>
<keyword id="KW-0808">Transferase</keyword>
<name>KCY_METS4</name>
<organism>
    <name type="scientific">Methylobacterium sp. (strain 4-46)</name>
    <dbReference type="NCBI Taxonomy" id="426117"/>
    <lineage>
        <taxon>Bacteria</taxon>
        <taxon>Pseudomonadati</taxon>
        <taxon>Pseudomonadota</taxon>
        <taxon>Alphaproteobacteria</taxon>
        <taxon>Hyphomicrobiales</taxon>
        <taxon>Methylobacteriaceae</taxon>
        <taxon>Methylobacterium</taxon>
    </lineage>
</organism>
<proteinExistence type="inferred from homology"/>